<dbReference type="EMBL" id="AL022101">
    <property type="status" value="NOT_ANNOTATED_CDS"/>
    <property type="molecule type" value="Genomic_DNA"/>
</dbReference>
<dbReference type="EMBL" id="CH471130">
    <property type="protein sequence ID" value="EAW71752.1"/>
    <property type="molecule type" value="Genomic_DNA"/>
</dbReference>
<dbReference type="EMBL" id="BC137258">
    <property type="protein sequence ID" value="AAI37259.1"/>
    <property type="molecule type" value="mRNA"/>
</dbReference>
<dbReference type="EMBL" id="BC171866">
    <property type="protein sequence ID" value="AAI71866.1"/>
    <property type="molecule type" value="mRNA"/>
</dbReference>
<dbReference type="CCDS" id="CCDS30591.1"/>
<dbReference type="RefSeq" id="NP_001013653.1">
    <property type="nucleotide sequence ID" value="NM_001013631.3"/>
</dbReference>
<dbReference type="SMR" id="O60812"/>
<dbReference type="BioGRID" id="131227">
    <property type="interactions" value="195"/>
</dbReference>
<dbReference type="FunCoup" id="O60812">
    <property type="interactions" value="978"/>
</dbReference>
<dbReference type="IntAct" id="O60812">
    <property type="interactions" value="148"/>
</dbReference>
<dbReference type="MINT" id="O60812"/>
<dbReference type="STRING" id="9606.ENSP00000365370"/>
<dbReference type="GlyGen" id="O60812">
    <property type="glycosylation" value="1 site, 1 O-linked glycan (1 site)"/>
</dbReference>
<dbReference type="iPTMnet" id="O60812"/>
<dbReference type="PhosphoSitePlus" id="O60812"/>
<dbReference type="SwissPalm" id="O60812"/>
<dbReference type="BioMuta" id="HNRNPCL1"/>
<dbReference type="jPOST" id="O60812"/>
<dbReference type="MassIVE" id="O60812"/>
<dbReference type="PaxDb" id="9606-ENSP00000479365"/>
<dbReference type="PeptideAtlas" id="O60812"/>
<dbReference type="ProteomicsDB" id="49605"/>
<dbReference type="Pumba" id="O60812"/>
<dbReference type="Antibodypedia" id="65448">
    <property type="antibodies" value="107 antibodies from 19 providers"/>
</dbReference>
<dbReference type="DNASU" id="343069"/>
<dbReference type="Ensembl" id="ENST00000317869.7">
    <property type="protein sequence ID" value="ENSP00000365370.4"/>
    <property type="gene ID" value="ENSG00000179172.10"/>
</dbReference>
<dbReference type="Ensembl" id="ENST00000634171.3">
    <property type="protein sequence ID" value="ENSP00000488130.1"/>
    <property type="gene ID" value="ENSG00000282175.4"/>
</dbReference>
<dbReference type="GeneID" id="343069"/>
<dbReference type="KEGG" id="hsa:343069"/>
<dbReference type="MANE-Select" id="ENST00000317869.7">
    <property type="protein sequence ID" value="ENSP00000365370.4"/>
    <property type="RefSeq nucleotide sequence ID" value="NM_001013631.3"/>
    <property type="RefSeq protein sequence ID" value="NP_001013653.1"/>
</dbReference>
<dbReference type="UCSC" id="uc010obf.2">
    <property type="organism name" value="human"/>
</dbReference>
<dbReference type="AGR" id="HGNC:29295"/>
<dbReference type="CTD" id="343069"/>
<dbReference type="DisGeNET" id="343069"/>
<dbReference type="GeneCards" id="HNRNPCL1"/>
<dbReference type="HGNC" id="HGNC:29295">
    <property type="gene designation" value="HNRNPCL1"/>
</dbReference>
<dbReference type="HPA" id="ENSG00000179172">
    <property type="expression patterns" value="Not detected"/>
</dbReference>
<dbReference type="neXtProt" id="NX_O60812"/>
<dbReference type="OpenTargets" id="ENSG00000179172"/>
<dbReference type="PharmGKB" id="PA162391240"/>
<dbReference type="VEuPathDB" id="HostDB:ENSG00000179172"/>
<dbReference type="eggNOG" id="KOG0118">
    <property type="taxonomic scope" value="Eukaryota"/>
</dbReference>
<dbReference type="GeneTree" id="ENSGT00940000153402"/>
<dbReference type="HOGENOM" id="CLU_079090_0_0_1"/>
<dbReference type="InParanoid" id="O60812"/>
<dbReference type="OMA" id="GGMTSWC"/>
<dbReference type="PAN-GO" id="O60812">
    <property type="GO annotations" value="2 GO annotations based on evolutionary models"/>
</dbReference>
<dbReference type="PhylomeDB" id="O60812"/>
<dbReference type="TreeFam" id="TF330974"/>
<dbReference type="PathwayCommons" id="O60812"/>
<dbReference type="SignaLink" id="O60812"/>
<dbReference type="BioGRID-ORCS" id="343069">
    <property type="hits" value="103 hits in 1036 CRISPR screens"/>
</dbReference>
<dbReference type="CD-CODE" id="232F8A39">
    <property type="entry name" value="P-body"/>
</dbReference>
<dbReference type="GenomeRNAi" id="343069"/>
<dbReference type="Pharos" id="O60812">
    <property type="development level" value="Tdark"/>
</dbReference>
<dbReference type="PRO" id="PR:O60812"/>
<dbReference type="Proteomes" id="UP000005640">
    <property type="component" value="Chromosome 1"/>
</dbReference>
<dbReference type="RNAct" id="O60812">
    <property type="molecule type" value="protein"/>
</dbReference>
<dbReference type="Bgee" id="ENSG00000179172">
    <property type="expression patterns" value="Expressed in skeletal muscle tissue of biceps brachii and 25 other cell types or tissues"/>
</dbReference>
<dbReference type="GO" id="GO:0005634">
    <property type="term" value="C:nucleus"/>
    <property type="evidence" value="ECO:0000318"/>
    <property type="project" value="GO_Central"/>
</dbReference>
<dbReference type="GO" id="GO:1990904">
    <property type="term" value="C:ribonucleoprotein complex"/>
    <property type="evidence" value="ECO:0007669"/>
    <property type="project" value="UniProtKB-KW"/>
</dbReference>
<dbReference type="GO" id="GO:0042802">
    <property type="term" value="F:identical protein binding"/>
    <property type="evidence" value="ECO:0000353"/>
    <property type="project" value="IntAct"/>
</dbReference>
<dbReference type="GO" id="GO:0003723">
    <property type="term" value="F:RNA binding"/>
    <property type="evidence" value="ECO:0007005"/>
    <property type="project" value="UniProtKB"/>
</dbReference>
<dbReference type="FunFam" id="3.30.70.330:FF:000019">
    <property type="entry name" value="heterogeneous nuclear ribonucleoproteins C1/C2 isoform X1"/>
    <property type="match status" value="1"/>
</dbReference>
<dbReference type="Gene3D" id="3.30.70.330">
    <property type="match status" value="1"/>
</dbReference>
<dbReference type="InterPro" id="IPR017347">
    <property type="entry name" value="hnRNP_C"/>
</dbReference>
<dbReference type="InterPro" id="IPR012677">
    <property type="entry name" value="Nucleotide-bd_a/b_plait_sf"/>
</dbReference>
<dbReference type="InterPro" id="IPR035979">
    <property type="entry name" value="RBD_domain_sf"/>
</dbReference>
<dbReference type="InterPro" id="IPR000504">
    <property type="entry name" value="RRM_dom"/>
</dbReference>
<dbReference type="InterPro" id="IPR051186">
    <property type="entry name" value="RRM_HNRPC/RALY_subfam"/>
</dbReference>
<dbReference type="PANTHER" id="PTHR13968">
    <property type="entry name" value="HETEROGENEOUS NUCLEAR RIBONUCLEOPROTEIN"/>
    <property type="match status" value="1"/>
</dbReference>
<dbReference type="PANTHER" id="PTHR13968:SF17">
    <property type="entry name" value="HETEROGENEOUS NUCLEAR RIBONUCLEOPROTEIN C-LIKE 1-RELATED"/>
    <property type="match status" value="1"/>
</dbReference>
<dbReference type="Pfam" id="PF00076">
    <property type="entry name" value="RRM_1"/>
    <property type="match status" value="1"/>
</dbReference>
<dbReference type="PIRSF" id="PIRSF037992">
    <property type="entry name" value="hnRNP-C_Raly"/>
    <property type="match status" value="1"/>
</dbReference>
<dbReference type="SMART" id="SM00360">
    <property type="entry name" value="RRM"/>
    <property type="match status" value="1"/>
</dbReference>
<dbReference type="SUPFAM" id="SSF54928">
    <property type="entry name" value="RNA-binding domain, RBD"/>
    <property type="match status" value="1"/>
</dbReference>
<dbReference type="PROSITE" id="PS50102">
    <property type="entry name" value="RRM"/>
    <property type="match status" value="1"/>
</dbReference>
<feature type="chain" id="PRO_0000081848" description="Heterogeneous nuclear ribonucleoprotein C-like 1">
    <location>
        <begin position="1"/>
        <end position="293"/>
    </location>
</feature>
<feature type="domain" description="RRM" evidence="3">
    <location>
        <begin position="16"/>
        <end position="87"/>
    </location>
</feature>
<feature type="region of interest" description="Disordered" evidence="4">
    <location>
        <begin position="137"/>
        <end position="177"/>
    </location>
</feature>
<feature type="region of interest" description="Disordered" evidence="4">
    <location>
        <begin position="206"/>
        <end position="293"/>
    </location>
</feature>
<feature type="coiled-coil region" evidence="2">
    <location>
        <begin position="177"/>
        <end position="225"/>
    </location>
</feature>
<feature type="compositionally biased region" description="Basic and acidic residues" evidence="4">
    <location>
        <begin position="206"/>
        <end position="222"/>
    </location>
</feature>
<feature type="compositionally biased region" description="Basic and acidic residues" evidence="4">
    <location>
        <begin position="229"/>
        <end position="240"/>
    </location>
</feature>
<feature type="compositionally biased region" description="Acidic residues" evidence="4">
    <location>
        <begin position="242"/>
        <end position="267"/>
    </location>
</feature>
<feature type="compositionally biased region" description="Acidic residues" evidence="4">
    <location>
        <begin position="275"/>
        <end position="284"/>
    </location>
</feature>
<feature type="sequence variant" id="VAR_059824" description="In dbSNP:rs2982092.">
    <original>D</original>
    <variation>V</variation>
    <location>
        <position position="81"/>
    </location>
</feature>
<feature type="sequence variant" id="VAR_052225" description="In dbSNP:rs6702447.">
    <original>Q</original>
    <variation>H</variation>
    <location>
        <position position="208"/>
    </location>
</feature>
<feature type="sequence variant" id="VAR_033723" description="In dbSNP:rs2076063.">
    <original>V</original>
    <variation>D</variation>
    <location>
        <position position="258"/>
    </location>
</feature>
<name>HNRC1_HUMAN</name>
<gene>
    <name type="primary">HNRNPCL1</name>
    <name type="synonym">HNRPCL1</name>
</gene>
<organism>
    <name type="scientific">Homo sapiens</name>
    <name type="common">Human</name>
    <dbReference type="NCBI Taxonomy" id="9606"/>
    <lineage>
        <taxon>Eukaryota</taxon>
        <taxon>Metazoa</taxon>
        <taxon>Chordata</taxon>
        <taxon>Craniata</taxon>
        <taxon>Vertebrata</taxon>
        <taxon>Euteleostomi</taxon>
        <taxon>Mammalia</taxon>
        <taxon>Eutheria</taxon>
        <taxon>Euarchontoglires</taxon>
        <taxon>Primates</taxon>
        <taxon>Haplorrhini</taxon>
        <taxon>Catarrhini</taxon>
        <taxon>Hominidae</taxon>
        <taxon>Homo</taxon>
    </lineage>
</organism>
<reference key="1">
    <citation type="journal article" date="2006" name="Nature">
        <title>The DNA sequence and biological annotation of human chromosome 1.</title>
        <authorList>
            <person name="Gregory S.G."/>
            <person name="Barlow K.F."/>
            <person name="McLay K.E."/>
            <person name="Kaul R."/>
            <person name="Swarbreck D."/>
            <person name="Dunham A."/>
            <person name="Scott C.E."/>
            <person name="Howe K.L."/>
            <person name="Woodfine K."/>
            <person name="Spencer C.C.A."/>
            <person name="Jones M.C."/>
            <person name="Gillson C."/>
            <person name="Searle S."/>
            <person name="Zhou Y."/>
            <person name="Kokocinski F."/>
            <person name="McDonald L."/>
            <person name="Evans R."/>
            <person name="Phillips K."/>
            <person name="Atkinson A."/>
            <person name="Cooper R."/>
            <person name="Jones C."/>
            <person name="Hall R.E."/>
            <person name="Andrews T.D."/>
            <person name="Lloyd C."/>
            <person name="Ainscough R."/>
            <person name="Almeida J.P."/>
            <person name="Ambrose K.D."/>
            <person name="Anderson F."/>
            <person name="Andrew R.W."/>
            <person name="Ashwell R.I.S."/>
            <person name="Aubin K."/>
            <person name="Babbage A.K."/>
            <person name="Bagguley C.L."/>
            <person name="Bailey J."/>
            <person name="Beasley H."/>
            <person name="Bethel G."/>
            <person name="Bird C.P."/>
            <person name="Bray-Allen S."/>
            <person name="Brown J.Y."/>
            <person name="Brown A.J."/>
            <person name="Buckley D."/>
            <person name="Burton J."/>
            <person name="Bye J."/>
            <person name="Carder C."/>
            <person name="Chapman J.C."/>
            <person name="Clark S.Y."/>
            <person name="Clarke G."/>
            <person name="Clee C."/>
            <person name="Cobley V."/>
            <person name="Collier R.E."/>
            <person name="Corby N."/>
            <person name="Coville G.J."/>
            <person name="Davies J."/>
            <person name="Deadman R."/>
            <person name="Dunn M."/>
            <person name="Earthrowl M."/>
            <person name="Ellington A.G."/>
            <person name="Errington H."/>
            <person name="Frankish A."/>
            <person name="Frankland J."/>
            <person name="French L."/>
            <person name="Garner P."/>
            <person name="Garnett J."/>
            <person name="Gay L."/>
            <person name="Ghori M.R.J."/>
            <person name="Gibson R."/>
            <person name="Gilby L.M."/>
            <person name="Gillett W."/>
            <person name="Glithero R.J."/>
            <person name="Grafham D.V."/>
            <person name="Griffiths C."/>
            <person name="Griffiths-Jones S."/>
            <person name="Grocock R."/>
            <person name="Hammond S."/>
            <person name="Harrison E.S.I."/>
            <person name="Hart E."/>
            <person name="Haugen E."/>
            <person name="Heath P.D."/>
            <person name="Holmes S."/>
            <person name="Holt K."/>
            <person name="Howden P.J."/>
            <person name="Hunt A.R."/>
            <person name="Hunt S.E."/>
            <person name="Hunter G."/>
            <person name="Isherwood J."/>
            <person name="James R."/>
            <person name="Johnson C."/>
            <person name="Johnson D."/>
            <person name="Joy A."/>
            <person name="Kay M."/>
            <person name="Kershaw J.K."/>
            <person name="Kibukawa M."/>
            <person name="Kimberley A.M."/>
            <person name="King A."/>
            <person name="Knights A.J."/>
            <person name="Lad H."/>
            <person name="Laird G."/>
            <person name="Lawlor S."/>
            <person name="Leongamornlert D.A."/>
            <person name="Lloyd D.M."/>
            <person name="Loveland J."/>
            <person name="Lovell J."/>
            <person name="Lush M.J."/>
            <person name="Lyne R."/>
            <person name="Martin S."/>
            <person name="Mashreghi-Mohammadi M."/>
            <person name="Matthews L."/>
            <person name="Matthews N.S.W."/>
            <person name="McLaren S."/>
            <person name="Milne S."/>
            <person name="Mistry S."/>
            <person name="Moore M.J.F."/>
            <person name="Nickerson T."/>
            <person name="O'Dell C.N."/>
            <person name="Oliver K."/>
            <person name="Palmeiri A."/>
            <person name="Palmer S.A."/>
            <person name="Parker A."/>
            <person name="Patel D."/>
            <person name="Pearce A.V."/>
            <person name="Peck A.I."/>
            <person name="Pelan S."/>
            <person name="Phelps K."/>
            <person name="Phillimore B.J."/>
            <person name="Plumb R."/>
            <person name="Rajan J."/>
            <person name="Raymond C."/>
            <person name="Rouse G."/>
            <person name="Saenphimmachak C."/>
            <person name="Sehra H.K."/>
            <person name="Sheridan E."/>
            <person name="Shownkeen R."/>
            <person name="Sims S."/>
            <person name="Skuce C.D."/>
            <person name="Smith M."/>
            <person name="Steward C."/>
            <person name="Subramanian S."/>
            <person name="Sycamore N."/>
            <person name="Tracey A."/>
            <person name="Tromans A."/>
            <person name="Van Helmond Z."/>
            <person name="Wall M."/>
            <person name="Wallis J.M."/>
            <person name="White S."/>
            <person name="Whitehead S.L."/>
            <person name="Wilkinson J.E."/>
            <person name="Willey D.L."/>
            <person name="Williams H."/>
            <person name="Wilming L."/>
            <person name="Wray P.W."/>
            <person name="Wu Z."/>
            <person name="Coulson A."/>
            <person name="Vaudin M."/>
            <person name="Sulston J.E."/>
            <person name="Durbin R.M."/>
            <person name="Hubbard T."/>
            <person name="Wooster R."/>
            <person name="Dunham I."/>
            <person name="Carter N.P."/>
            <person name="McVean G."/>
            <person name="Ross M.T."/>
            <person name="Harrow J."/>
            <person name="Olson M.V."/>
            <person name="Beck S."/>
            <person name="Rogers J."/>
            <person name="Bentley D.R."/>
        </authorList>
    </citation>
    <scope>NUCLEOTIDE SEQUENCE [LARGE SCALE GENOMIC DNA]</scope>
</reference>
<reference key="2">
    <citation type="submission" date="2005-07" db="EMBL/GenBank/DDBJ databases">
        <authorList>
            <person name="Mural R.J."/>
            <person name="Istrail S."/>
            <person name="Sutton G.G."/>
            <person name="Florea L."/>
            <person name="Halpern A.L."/>
            <person name="Mobarry C.M."/>
            <person name="Lippert R."/>
            <person name="Walenz B."/>
            <person name="Shatkay H."/>
            <person name="Dew I."/>
            <person name="Miller J.R."/>
            <person name="Flanigan M.J."/>
            <person name="Edwards N.J."/>
            <person name="Bolanos R."/>
            <person name="Fasulo D."/>
            <person name="Halldorsson B.V."/>
            <person name="Hannenhalli S."/>
            <person name="Turner R."/>
            <person name="Yooseph S."/>
            <person name="Lu F."/>
            <person name="Nusskern D.R."/>
            <person name="Shue B.C."/>
            <person name="Zheng X.H."/>
            <person name="Zhong F."/>
            <person name="Delcher A.L."/>
            <person name="Huson D.H."/>
            <person name="Kravitz S.A."/>
            <person name="Mouchard L."/>
            <person name="Reinert K."/>
            <person name="Remington K.A."/>
            <person name="Clark A.G."/>
            <person name="Waterman M.S."/>
            <person name="Eichler E.E."/>
            <person name="Adams M.D."/>
            <person name="Hunkapiller M.W."/>
            <person name="Myers E.W."/>
            <person name="Venter J.C."/>
        </authorList>
    </citation>
    <scope>NUCLEOTIDE SEQUENCE [LARGE SCALE GENOMIC DNA]</scope>
</reference>
<reference key="3">
    <citation type="journal article" date="2004" name="Genome Res.">
        <title>The status, quality, and expansion of the NIH full-length cDNA project: the Mammalian Gene Collection (MGC).</title>
        <authorList>
            <consortium name="The MGC Project Team"/>
        </authorList>
    </citation>
    <scope>NUCLEOTIDE SEQUENCE [LARGE SCALE MRNA]</scope>
</reference>
<sequence>MASNVTNKMDPHSMNSRVFIGNLNTLVVKKSDVEAIFSKYGKIAGCSVHKGFAFVQYDKEKNARAAVAGEDGRMIASQVVDINLAAEPKVNRGNAGVKRSAAEMYGSSFDLDYGFQRDYYDGMYSFPARVPPPPPIALAVVPSKRQRLSGNTSRRGKSGFNSKSGKRGSSKSGKLKGDDLQAIKQELTQIKQKVDSLLENLEKIEKEQSKQEVEVKNAKSEEEQSSSSMKKDETHVKMESEGGAEDSAEEGDPLDDDVNEDQGDDQLELIKDDEKEAEEGEDDRDSTNGQDDS</sequence>
<keyword id="KW-0175">Coiled coil</keyword>
<keyword id="KW-0539">Nucleus</keyword>
<keyword id="KW-1267">Proteomics identification</keyword>
<keyword id="KW-1185">Reference proteome</keyword>
<keyword id="KW-0687">Ribonucleoprotein</keyword>
<keyword id="KW-0694">RNA-binding</keyword>
<proteinExistence type="evidence at protein level"/>
<protein>
    <recommendedName>
        <fullName>Heterogeneous nuclear ribonucleoprotein C-like 1</fullName>
        <shortName>hnRNP C-like-1</shortName>
    </recommendedName>
    <alternativeName>
        <fullName>hnRNP core protein C-like 1</fullName>
    </alternativeName>
</protein>
<comment type="function">
    <text evidence="1">May play a role in nucleosome assembly by neutralizing basic proteins such as A and B core hnRNPs.</text>
</comment>
<comment type="interaction">
    <interactant intactId="EBI-1046507">
        <id>O60812</id>
    </interactant>
    <interactant intactId="EBI-18396958">
        <id>A1L168</id>
        <label>C20orf202</label>
    </interactant>
    <organismsDiffer>false</organismsDiffer>
    <experiments>3</experiments>
</comment>
<comment type="interaction">
    <interactant intactId="EBI-1046507">
        <id>O60812</id>
    </interactant>
    <interactant intactId="EBI-357966">
        <id>P07910</id>
        <label>HNRNPC</label>
    </interactant>
    <organismsDiffer>false</organismsDiffer>
    <experiments>6</experiments>
</comment>
<comment type="interaction">
    <interactant intactId="EBI-1046507">
        <id>O60812</id>
    </interactant>
    <interactant intactId="EBI-1046507">
        <id>O60812</id>
        <label>HNRNPCL1</label>
    </interactant>
    <organismsDiffer>false</organismsDiffer>
    <experiments>3</experiments>
</comment>
<comment type="interaction">
    <interactant intactId="EBI-1046507">
        <id>O60812</id>
    </interactant>
    <interactant intactId="EBI-9512317">
        <id>B2RXH8</id>
        <label>HNRNPCL2</label>
    </interactant>
    <organismsDiffer>false</organismsDiffer>
    <experiments>4</experiments>
</comment>
<comment type="interaction">
    <interactant intactId="EBI-1046507">
        <id>O60812</id>
    </interactant>
    <interactant intactId="EBI-348567">
        <id>O75928-2</id>
        <label>PIAS2</label>
    </interactant>
    <organismsDiffer>false</organismsDiffer>
    <experiments>3</experiments>
</comment>
<comment type="interaction">
    <interactant intactId="EBI-1046507">
        <id>O60812</id>
    </interactant>
    <interactant intactId="EBI-948156">
        <id>Q9Y4B4</id>
        <label>RAD54L2</label>
    </interactant>
    <organismsDiffer>false</organismsDiffer>
    <experiments>3</experiments>
</comment>
<comment type="interaction">
    <interactant intactId="EBI-1046507">
        <id>O60812</id>
    </interactant>
    <interactant intactId="EBI-9512693">
        <id>Q53GL6</id>
        <label>RALY</label>
    </interactant>
    <organismsDiffer>false</organismsDiffer>
    <experiments>3</experiments>
</comment>
<comment type="interaction">
    <interactant intactId="EBI-1046507">
        <id>O60812</id>
    </interactant>
    <interactant intactId="EBI-11526555">
        <id>Q86SE5-3</id>
        <label>RALYL</label>
    </interactant>
    <organismsDiffer>false</organismsDiffer>
    <experiments>3</experiments>
</comment>
<comment type="interaction">
    <interactant intactId="EBI-1046507">
        <id>O60812</id>
    </interactant>
    <interactant intactId="EBI-2340927">
        <id>P78317</id>
        <label>RNF4</label>
    </interactant>
    <organismsDiffer>false</organismsDiffer>
    <experiments>3</experiments>
</comment>
<comment type="interaction">
    <interactant intactId="EBI-1046507">
        <id>O60812</id>
    </interactant>
    <interactant intactId="EBI-10180829">
        <id>Q7KZS0</id>
        <label>UBE2I</label>
    </interactant>
    <organismsDiffer>false</organismsDiffer>
    <experiments>3</experiments>
</comment>
<comment type="subcellular location">
    <subcellularLocation>
        <location evidence="1">Nucleus</location>
    </subcellularLocation>
    <text evidence="1">Component of ribonucleosomes.</text>
</comment>
<comment type="similarity">
    <text evidence="5">Belongs to the RRM HNRPC family. RALY subfamily.</text>
</comment>
<accession>O60812</accession>
<accession>B2RP44</accession>
<evidence type="ECO:0000250" key="1"/>
<evidence type="ECO:0000255" key="2"/>
<evidence type="ECO:0000255" key="3">
    <source>
        <dbReference type="PROSITE-ProRule" id="PRU00176"/>
    </source>
</evidence>
<evidence type="ECO:0000256" key="4">
    <source>
        <dbReference type="SAM" id="MobiDB-lite"/>
    </source>
</evidence>
<evidence type="ECO:0000305" key="5"/>